<keyword id="KW-0963">Cytoplasm</keyword>
<keyword id="KW-1185">Reference proteome</keyword>
<keyword id="KW-0819">tRNA processing</keyword>
<dbReference type="EMBL" id="CP017630">
    <property type="protein sequence ID" value="AOW31093.1"/>
    <property type="molecule type" value="Genomic_DNA"/>
</dbReference>
<dbReference type="RefSeq" id="XP_715175.2">
    <property type="nucleotide sequence ID" value="XM_710082.2"/>
</dbReference>
<dbReference type="BioGRID" id="1226310">
    <property type="interactions" value="1"/>
</dbReference>
<dbReference type="FunCoup" id="Q59ZY9">
    <property type="interactions" value="197"/>
</dbReference>
<dbReference type="STRING" id="237561.Q59ZY9"/>
<dbReference type="EnsemblFungi" id="CR_03550W_A-T">
    <property type="protein sequence ID" value="CR_03550W_A-T-p1"/>
    <property type="gene ID" value="CR_03550W_A"/>
</dbReference>
<dbReference type="GeneID" id="3643216"/>
<dbReference type="KEGG" id="cal:CAALFM_CR03550WA"/>
<dbReference type="CGD" id="CAL0000189560">
    <property type="gene designation" value="NCS2"/>
</dbReference>
<dbReference type="VEuPathDB" id="FungiDB:CR_03550W_A"/>
<dbReference type="eggNOG" id="KOG2594">
    <property type="taxonomic scope" value="Eukaryota"/>
</dbReference>
<dbReference type="HOGENOM" id="CLU_024534_1_0_1"/>
<dbReference type="InParanoid" id="Q59ZY9"/>
<dbReference type="OrthoDB" id="25129at2759"/>
<dbReference type="UniPathway" id="UPA00988"/>
<dbReference type="PRO" id="PR:Q59ZY9"/>
<dbReference type="Proteomes" id="UP000000559">
    <property type="component" value="Chromosome R"/>
</dbReference>
<dbReference type="GO" id="GO:0005829">
    <property type="term" value="C:cytosol"/>
    <property type="evidence" value="ECO:0000250"/>
    <property type="project" value="UniProtKB"/>
</dbReference>
<dbReference type="GO" id="GO:0016779">
    <property type="term" value="F:nucleotidyltransferase activity"/>
    <property type="evidence" value="ECO:0007669"/>
    <property type="project" value="UniProtKB-UniRule"/>
</dbReference>
<dbReference type="GO" id="GO:0016783">
    <property type="term" value="F:sulfurtransferase activity"/>
    <property type="evidence" value="ECO:0000318"/>
    <property type="project" value="GO_Central"/>
</dbReference>
<dbReference type="GO" id="GO:0000049">
    <property type="term" value="F:tRNA binding"/>
    <property type="evidence" value="ECO:0007669"/>
    <property type="project" value="InterPro"/>
</dbReference>
<dbReference type="GO" id="GO:0030447">
    <property type="term" value="P:filamentous growth"/>
    <property type="evidence" value="ECO:0000315"/>
    <property type="project" value="CGD"/>
</dbReference>
<dbReference type="GO" id="GO:0032447">
    <property type="term" value="P:protein urmylation"/>
    <property type="evidence" value="ECO:0007669"/>
    <property type="project" value="UniProtKB-UniRule"/>
</dbReference>
<dbReference type="GO" id="GO:0034227">
    <property type="term" value="P:tRNA thio-modification"/>
    <property type="evidence" value="ECO:0000250"/>
    <property type="project" value="UniProtKB"/>
</dbReference>
<dbReference type="GO" id="GO:0002143">
    <property type="term" value="P:tRNA wobble position uridine thiolation"/>
    <property type="evidence" value="ECO:0000315"/>
    <property type="project" value="CGD"/>
</dbReference>
<dbReference type="GO" id="GO:0002098">
    <property type="term" value="P:tRNA wobble uridine modification"/>
    <property type="evidence" value="ECO:0000250"/>
    <property type="project" value="UniProtKB"/>
</dbReference>
<dbReference type="FunFam" id="3.40.50.620:FF:000366">
    <property type="entry name" value="Cytoplasmic tRNA 2-thiolation protein 2"/>
    <property type="match status" value="1"/>
</dbReference>
<dbReference type="Gene3D" id="3.40.50.620">
    <property type="entry name" value="HUPs"/>
    <property type="match status" value="1"/>
</dbReference>
<dbReference type="HAMAP" id="MF_03054">
    <property type="entry name" value="CTU2"/>
    <property type="match status" value="1"/>
</dbReference>
<dbReference type="InterPro" id="IPR019407">
    <property type="entry name" value="CTU2"/>
</dbReference>
<dbReference type="InterPro" id="IPR014729">
    <property type="entry name" value="Rossmann-like_a/b/a_fold"/>
</dbReference>
<dbReference type="PANTHER" id="PTHR20882">
    <property type="entry name" value="CYTOPLASMIC TRNA 2-THIOLATION PROTEIN 2"/>
    <property type="match status" value="1"/>
</dbReference>
<dbReference type="PANTHER" id="PTHR20882:SF14">
    <property type="entry name" value="CYTOPLASMIC TRNA 2-THIOLATION PROTEIN 2"/>
    <property type="match status" value="1"/>
</dbReference>
<dbReference type="Pfam" id="PF10288">
    <property type="entry name" value="CTU2"/>
    <property type="match status" value="1"/>
</dbReference>
<dbReference type="SUPFAM" id="SSF52402">
    <property type="entry name" value="Adenine nucleotide alpha hydrolases-like"/>
    <property type="match status" value="1"/>
</dbReference>
<sequence length="452" mass="51001">MPEAIVYLTETEICQKCKTENAVVHARVEKLCSNCYIRFIRGKLRKQMHDERYKVKFGRAVEQYGTQRILLALSGGESSLVLLDIFGSLLQEQNELHKGKQGFELVVVNLDEYELDSLNNRIQKVFPELLAKYQPVKISLNVLSLDSYVDEESLHRILLTPDFRAMSKSIDPTRVTLTEILRLCPNKSSAEDLLTIVYNDLILRVAAKEDCQTVVYGHCMTRLANEIIALTVKGRGSIIHKSIADHTETIDDKEIKVMFPLREILQAEISAYVKLAELNKYVISSTVQKSKINKNLTIRDLTTNYFKQLDATGYASTASTVAKTGEKLGSPSNVLCQCQICGADIHQNPSNWLKRITVTDPAAITTDEEKEYYEMFRASLSPDNEDKNNSDSPIDICFGCTVTLGGVKGDTGFIWPLQGSSELKYEYRNDNQEKQKVLDEFVLTDDEGDIEV</sequence>
<protein>
    <recommendedName>
        <fullName evidence="1">Cytoplasmic tRNA 2-thiolation protein 2</fullName>
    </recommendedName>
</protein>
<reference key="1">
    <citation type="journal article" date="2004" name="Proc. Natl. Acad. Sci. U.S.A.">
        <title>The diploid genome sequence of Candida albicans.</title>
        <authorList>
            <person name="Jones T."/>
            <person name="Federspiel N.A."/>
            <person name="Chibana H."/>
            <person name="Dungan J."/>
            <person name="Kalman S."/>
            <person name="Magee B.B."/>
            <person name="Newport G."/>
            <person name="Thorstenson Y.R."/>
            <person name="Agabian N."/>
            <person name="Magee P.T."/>
            <person name="Davis R.W."/>
            <person name="Scherer S."/>
        </authorList>
    </citation>
    <scope>NUCLEOTIDE SEQUENCE [LARGE SCALE GENOMIC DNA]</scope>
    <source>
        <strain>SC5314 / ATCC MYA-2876</strain>
    </source>
</reference>
<reference key="2">
    <citation type="journal article" date="2007" name="Genome Biol.">
        <title>Assembly of the Candida albicans genome into sixteen supercontigs aligned on the eight chromosomes.</title>
        <authorList>
            <person name="van het Hoog M."/>
            <person name="Rast T.J."/>
            <person name="Martchenko M."/>
            <person name="Grindle S."/>
            <person name="Dignard D."/>
            <person name="Hogues H."/>
            <person name="Cuomo C."/>
            <person name="Berriman M."/>
            <person name="Scherer S."/>
            <person name="Magee B.B."/>
            <person name="Whiteway M."/>
            <person name="Chibana H."/>
            <person name="Nantel A."/>
            <person name="Magee P.T."/>
        </authorList>
    </citation>
    <scope>GENOME REANNOTATION</scope>
    <source>
        <strain>SC5314 / ATCC MYA-2876</strain>
    </source>
</reference>
<reference key="3">
    <citation type="journal article" date="2013" name="Genome Biol.">
        <title>Assembly of a phased diploid Candida albicans genome facilitates allele-specific measurements and provides a simple model for repeat and indel structure.</title>
        <authorList>
            <person name="Muzzey D."/>
            <person name="Schwartz K."/>
            <person name="Weissman J.S."/>
            <person name="Sherlock G."/>
        </authorList>
    </citation>
    <scope>NUCLEOTIDE SEQUENCE [LARGE SCALE GENOMIC DNA]</scope>
    <scope>GENOME REANNOTATION</scope>
    <source>
        <strain>SC5314 / ATCC MYA-2876</strain>
    </source>
</reference>
<feature type="chain" id="PRO_0000369292" description="Cytoplasmic tRNA 2-thiolation protein 2">
    <location>
        <begin position="1"/>
        <end position="452"/>
    </location>
</feature>
<accession>Q59ZY9</accession>
<accession>A0A1D8PSH9</accession>
<proteinExistence type="inferred from homology"/>
<evidence type="ECO:0000255" key="1">
    <source>
        <dbReference type="HAMAP-Rule" id="MF_03054"/>
    </source>
</evidence>
<gene>
    <name evidence="1" type="primary">NCS2</name>
    <name evidence="1" type="synonym">CTU2</name>
    <name type="ordered locus">CAALFM_CR03550WA</name>
    <name type="ORF">CaO19.11877</name>
    <name type="ORF">CaO19.4399</name>
</gene>
<name>CTU2_CANAL</name>
<comment type="function">
    <text evidence="1">Plays a central role in 2-thiolation of mcm(5)S(2)U at tRNA wobble positions of tRNA(Lys), tRNA(Glu) and tRNA(Gln). May act by forming a heterodimer with NCS6 that ligates sulfur from thiocarboxylated URM1 onto the uridine of tRNAs at wobble position. Prior mcm(5) tRNA modification by the elongator complex is required for 2-thiolation. May also be involved in protein urmylation.</text>
</comment>
<comment type="pathway">
    <text evidence="1">tRNA modification; 5-methoxycarbonylmethyl-2-thiouridine-tRNA biosynthesis.</text>
</comment>
<comment type="subcellular location">
    <subcellularLocation>
        <location evidence="1">Cytoplasm</location>
    </subcellularLocation>
</comment>
<comment type="similarity">
    <text evidence="1">Belongs to the CTU2/NCS2 family.</text>
</comment>
<organism>
    <name type="scientific">Candida albicans (strain SC5314 / ATCC MYA-2876)</name>
    <name type="common">Yeast</name>
    <dbReference type="NCBI Taxonomy" id="237561"/>
    <lineage>
        <taxon>Eukaryota</taxon>
        <taxon>Fungi</taxon>
        <taxon>Dikarya</taxon>
        <taxon>Ascomycota</taxon>
        <taxon>Saccharomycotina</taxon>
        <taxon>Pichiomycetes</taxon>
        <taxon>Debaryomycetaceae</taxon>
        <taxon>Candida/Lodderomyces clade</taxon>
        <taxon>Candida</taxon>
    </lineage>
</organism>